<comment type="subcellular location">
    <subcellularLocation>
        <location>Plastid</location>
        <location>Chloroplast</location>
    </subcellularLocation>
</comment>
<comment type="similarity">
    <text evidence="2">Belongs to the bacterial ribosomal protein bL32 family.</text>
</comment>
<proteinExistence type="inferred from homology"/>
<protein>
    <recommendedName>
        <fullName evidence="2">Large ribosomal subunit protein bL32c</fullName>
    </recommendedName>
    <alternativeName>
        <fullName evidence="3">50S ribosomal protein L32, chloroplastic</fullName>
    </alternativeName>
</protein>
<reference key="1">
    <citation type="journal article" date="2002" name="Proc. Natl. Acad. Sci. U.S.A.">
        <title>The chloroplast and mitochondrial genome sequences of the charophyte Chaetosphaeridium globosum: insights into the timing of the events that restructured organelle DNAs within the green algal lineage that led to land plants.</title>
        <authorList>
            <person name="Turmel M."/>
            <person name="Otis C."/>
            <person name="Lemieux C."/>
        </authorList>
    </citation>
    <scope>NUCLEOTIDE SEQUENCE [LARGE SCALE GENOMIC DNA]</scope>
    <source>
        <strain>M1311</strain>
    </source>
</reference>
<gene>
    <name evidence="2" type="primary">rpl32</name>
</gene>
<accession>Q8M9U3</accession>
<dbReference type="EMBL" id="AF494278">
    <property type="protein sequence ID" value="AAM96561.1"/>
    <property type="molecule type" value="Genomic_DNA"/>
</dbReference>
<dbReference type="RefSeq" id="NP_683850.1">
    <property type="nucleotide sequence ID" value="NC_004115.1"/>
</dbReference>
<dbReference type="SMR" id="Q8M9U3"/>
<dbReference type="GeneID" id="860717"/>
<dbReference type="GO" id="GO:0009507">
    <property type="term" value="C:chloroplast"/>
    <property type="evidence" value="ECO:0007669"/>
    <property type="project" value="UniProtKB-SubCell"/>
</dbReference>
<dbReference type="GO" id="GO:0015934">
    <property type="term" value="C:large ribosomal subunit"/>
    <property type="evidence" value="ECO:0007669"/>
    <property type="project" value="InterPro"/>
</dbReference>
<dbReference type="GO" id="GO:0003735">
    <property type="term" value="F:structural constituent of ribosome"/>
    <property type="evidence" value="ECO:0007669"/>
    <property type="project" value="InterPro"/>
</dbReference>
<dbReference type="GO" id="GO:0006412">
    <property type="term" value="P:translation"/>
    <property type="evidence" value="ECO:0007669"/>
    <property type="project" value="UniProtKB-UniRule"/>
</dbReference>
<dbReference type="HAMAP" id="MF_00340">
    <property type="entry name" value="Ribosomal_bL32"/>
    <property type="match status" value="1"/>
</dbReference>
<dbReference type="InterPro" id="IPR002677">
    <property type="entry name" value="Ribosomal_bL32"/>
</dbReference>
<dbReference type="InterPro" id="IPR044958">
    <property type="entry name" value="Ribosomal_bL32_plant/cyanobact"/>
</dbReference>
<dbReference type="InterPro" id="IPR011332">
    <property type="entry name" value="Ribosomal_zn-bd"/>
</dbReference>
<dbReference type="PANTHER" id="PTHR36083">
    <property type="entry name" value="50S RIBOSOMAL PROTEIN L32, CHLOROPLASTIC"/>
    <property type="match status" value="1"/>
</dbReference>
<dbReference type="PANTHER" id="PTHR36083:SF1">
    <property type="entry name" value="LARGE RIBOSOMAL SUBUNIT PROTEIN BL32C"/>
    <property type="match status" value="1"/>
</dbReference>
<dbReference type="Pfam" id="PF01783">
    <property type="entry name" value="Ribosomal_L32p"/>
    <property type="match status" value="1"/>
</dbReference>
<dbReference type="SUPFAM" id="SSF57829">
    <property type="entry name" value="Zn-binding ribosomal proteins"/>
    <property type="match status" value="1"/>
</dbReference>
<feature type="initiator methionine" description="Removed" evidence="1">
    <location>
        <position position="1"/>
    </location>
</feature>
<feature type="chain" id="PRO_0000172453" description="Large ribosomal subunit protein bL32c">
    <location>
        <begin position="2"/>
        <end position="58"/>
    </location>
</feature>
<evidence type="ECO:0000250" key="1"/>
<evidence type="ECO:0000255" key="2">
    <source>
        <dbReference type="HAMAP-Rule" id="MF_00340"/>
    </source>
</evidence>
<evidence type="ECO:0000305" key="3"/>
<sequence>MAVPKKRTSRSKTRIKKQIWKSQADKMALKALSLAKSVLSGKSKSFSYDVVEKSIDTN</sequence>
<geneLocation type="chloroplast"/>
<keyword id="KW-0150">Chloroplast</keyword>
<keyword id="KW-0934">Plastid</keyword>
<keyword id="KW-0687">Ribonucleoprotein</keyword>
<keyword id="KW-0689">Ribosomal protein</keyword>
<organism>
    <name type="scientific">Chaetosphaeridium globosum</name>
    <name type="common">Charophycean green alga</name>
    <name type="synonym">Herposteiron globosum</name>
    <dbReference type="NCBI Taxonomy" id="96477"/>
    <lineage>
        <taxon>Eukaryota</taxon>
        <taxon>Viridiplantae</taxon>
        <taxon>Streptophyta</taxon>
        <taxon>Coleochaetophyceae</taxon>
        <taxon>Coleochaetales</taxon>
        <taxon>Chaetosphaeridiaceae</taxon>
        <taxon>Chaetosphaeridium</taxon>
    </lineage>
</organism>
<name>RK32_CHAGL</name>